<protein>
    <recommendedName>
        <fullName evidence="1">Ribosome-recycling factor</fullName>
        <shortName evidence="1">RRF</shortName>
    </recommendedName>
    <alternativeName>
        <fullName evidence="1">Ribosome-releasing factor</fullName>
    </alternativeName>
</protein>
<feature type="chain" id="PRO_1000090808" description="Ribosome-recycling factor">
    <location>
        <begin position="1"/>
        <end position="185"/>
    </location>
</feature>
<organism>
    <name type="scientific">Yersinia pseudotuberculosis serotype O:3 (strain YPIII)</name>
    <dbReference type="NCBI Taxonomy" id="502800"/>
    <lineage>
        <taxon>Bacteria</taxon>
        <taxon>Pseudomonadati</taxon>
        <taxon>Pseudomonadota</taxon>
        <taxon>Gammaproteobacteria</taxon>
        <taxon>Enterobacterales</taxon>
        <taxon>Yersiniaceae</taxon>
        <taxon>Yersinia</taxon>
    </lineage>
</organism>
<keyword id="KW-0963">Cytoplasm</keyword>
<keyword id="KW-0648">Protein biosynthesis</keyword>
<gene>
    <name evidence="1" type="primary">frr</name>
    <name type="ordered locus">YPK_1069</name>
</gene>
<comment type="function">
    <text evidence="1">Responsible for the release of ribosomes from messenger RNA at the termination of protein biosynthesis. May increase the efficiency of translation by recycling ribosomes from one round of translation to another.</text>
</comment>
<comment type="subcellular location">
    <subcellularLocation>
        <location evidence="1">Cytoplasm</location>
    </subcellularLocation>
</comment>
<comment type="similarity">
    <text evidence="1">Belongs to the RRF family.</text>
</comment>
<name>RRF_YERPY</name>
<accession>B1JQG3</accession>
<proteinExistence type="inferred from homology"/>
<evidence type="ECO:0000255" key="1">
    <source>
        <dbReference type="HAMAP-Rule" id="MF_00040"/>
    </source>
</evidence>
<reference key="1">
    <citation type="submission" date="2008-02" db="EMBL/GenBank/DDBJ databases">
        <title>Complete sequence of Yersinia pseudotuberculosis YPIII.</title>
        <authorList>
            <consortium name="US DOE Joint Genome Institute"/>
            <person name="Copeland A."/>
            <person name="Lucas S."/>
            <person name="Lapidus A."/>
            <person name="Glavina del Rio T."/>
            <person name="Dalin E."/>
            <person name="Tice H."/>
            <person name="Bruce D."/>
            <person name="Goodwin L."/>
            <person name="Pitluck S."/>
            <person name="Munk A.C."/>
            <person name="Brettin T."/>
            <person name="Detter J.C."/>
            <person name="Han C."/>
            <person name="Tapia R."/>
            <person name="Schmutz J."/>
            <person name="Larimer F."/>
            <person name="Land M."/>
            <person name="Hauser L."/>
            <person name="Challacombe J.F."/>
            <person name="Green L."/>
            <person name="Lindler L.E."/>
            <person name="Nikolich M.P."/>
            <person name="Richardson P."/>
        </authorList>
    </citation>
    <scope>NUCLEOTIDE SEQUENCE [LARGE SCALE GENOMIC DNA]</scope>
    <source>
        <strain>YPIII</strain>
    </source>
</reference>
<dbReference type="EMBL" id="CP000950">
    <property type="protein sequence ID" value="ACA67370.1"/>
    <property type="molecule type" value="Genomic_DNA"/>
</dbReference>
<dbReference type="RefSeq" id="WP_002212134.1">
    <property type="nucleotide sequence ID" value="NZ_CP009792.1"/>
</dbReference>
<dbReference type="SMR" id="B1JQG3"/>
<dbReference type="GeneID" id="57977514"/>
<dbReference type="KEGG" id="ypy:YPK_1069"/>
<dbReference type="PATRIC" id="fig|502800.11.peg.1701"/>
<dbReference type="GO" id="GO:0005829">
    <property type="term" value="C:cytosol"/>
    <property type="evidence" value="ECO:0007669"/>
    <property type="project" value="GOC"/>
</dbReference>
<dbReference type="GO" id="GO:0043023">
    <property type="term" value="F:ribosomal large subunit binding"/>
    <property type="evidence" value="ECO:0007669"/>
    <property type="project" value="TreeGrafter"/>
</dbReference>
<dbReference type="GO" id="GO:0002184">
    <property type="term" value="P:cytoplasmic translational termination"/>
    <property type="evidence" value="ECO:0007669"/>
    <property type="project" value="TreeGrafter"/>
</dbReference>
<dbReference type="CDD" id="cd00520">
    <property type="entry name" value="RRF"/>
    <property type="match status" value="1"/>
</dbReference>
<dbReference type="FunFam" id="1.10.132.20:FF:000001">
    <property type="entry name" value="Ribosome-recycling factor"/>
    <property type="match status" value="1"/>
</dbReference>
<dbReference type="FunFam" id="3.30.1360.40:FF:000001">
    <property type="entry name" value="Ribosome-recycling factor"/>
    <property type="match status" value="1"/>
</dbReference>
<dbReference type="Gene3D" id="3.30.1360.40">
    <property type="match status" value="1"/>
</dbReference>
<dbReference type="Gene3D" id="1.10.132.20">
    <property type="entry name" value="Ribosome-recycling factor"/>
    <property type="match status" value="1"/>
</dbReference>
<dbReference type="HAMAP" id="MF_00040">
    <property type="entry name" value="RRF"/>
    <property type="match status" value="1"/>
</dbReference>
<dbReference type="InterPro" id="IPR002661">
    <property type="entry name" value="Ribosome_recyc_fac"/>
</dbReference>
<dbReference type="InterPro" id="IPR023584">
    <property type="entry name" value="Ribosome_recyc_fac_dom"/>
</dbReference>
<dbReference type="InterPro" id="IPR036191">
    <property type="entry name" value="RRF_sf"/>
</dbReference>
<dbReference type="NCBIfam" id="TIGR00496">
    <property type="entry name" value="frr"/>
    <property type="match status" value="1"/>
</dbReference>
<dbReference type="PANTHER" id="PTHR20982:SF3">
    <property type="entry name" value="MITOCHONDRIAL RIBOSOME RECYCLING FACTOR PSEUDO 1"/>
    <property type="match status" value="1"/>
</dbReference>
<dbReference type="PANTHER" id="PTHR20982">
    <property type="entry name" value="RIBOSOME RECYCLING FACTOR"/>
    <property type="match status" value="1"/>
</dbReference>
<dbReference type="Pfam" id="PF01765">
    <property type="entry name" value="RRF"/>
    <property type="match status" value="1"/>
</dbReference>
<dbReference type="SUPFAM" id="SSF55194">
    <property type="entry name" value="Ribosome recycling factor, RRF"/>
    <property type="match status" value="1"/>
</dbReference>
<sequence>MINEIRKDAEVRMEKCLEAFQNHISKIRTGRASPSILDGIQVEYYGTATPLRQLANIVVEDSRTLALTVFDRSLSAAVEKAIMTSDLGLNPSSAGTVIRVPLPALTEERRKDLIKVVRAEAEQGRVSIRNVRRDANDKVKALLKDKEISEDEDRRSQDDVQKLTDAYIKKVDAALAVKEAELMDF</sequence>